<keyword id="KW-0963">Cytoplasm</keyword>
<keyword id="KW-0275">Fatty acid biosynthesis</keyword>
<keyword id="KW-0276">Fatty acid metabolism</keyword>
<keyword id="KW-0444">Lipid biosynthesis</keyword>
<keyword id="KW-0443">Lipid metabolism</keyword>
<keyword id="KW-0460">Magnesium</keyword>
<keyword id="KW-0479">Metal-binding</keyword>
<keyword id="KW-1185">Reference proteome</keyword>
<keyword id="KW-0808">Transferase</keyword>
<sequence length="125" mass="13587">MILGTGIDIVEVPRIAQSIQRFGDRFLGRIYTPAEIRYCQSKANAVERFAARFAAKEAAMKAIGTGMRGGVTWHDFEVGREPGGRPTMVFHGKAAQVAQGLGGRRAHLSVSHTEQYAVASVILED</sequence>
<accession>Q1IHY2</accession>
<dbReference type="EC" id="2.7.8.7" evidence="1"/>
<dbReference type="EMBL" id="CP000360">
    <property type="protein sequence ID" value="ABF43518.1"/>
    <property type="molecule type" value="Genomic_DNA"/>
</dbReference>
<dbReference type="RefSeq" id="WP_011525315.1">
    <property type="nucleotide sequence ID" value="NC_008009.1"/>
</dbReference>
<dbReference type="SMR" id="Q1IHY2"/>
<dbReference type="STRING" id="204669.Acid345_4518"/>
<dbReference type="EnsemblBacteria" id="ABF43518">
    <property type="protein sequence ID" value="ABF43518"/>
    <property type="gene ID" value="Acid345_4518"/>
</dbReference>
<dbReference type="KEGG" id="aba:Acid345_4518"/>
<dbReference type="eggNOG" id="COG0736">
    <property type="taxonomic scope" value="Bacteria"/>
</dbReference>
<dbReference type="HOGENOM" id="CLU_089696_3_1_0"/>
<dbReference type="OrthoDB" id="517356at2"/>
<dbReference type="Proteomes" id="UP000002432">
    <property type="component" value="Chromosome"/>
</dbReference>
<dbReference type="GO" id="GO:0005737">
    <property type="term" value="C:cytoplasm"/>
    <property type="evidence" value="ECO:0007669"/>
    <property type="project" value="UniProtKB-SubCell"/>
</dbReference>
<dbReference type="GO" id="GO:0008897">
    <property type="term" value="F:holo-[acyl-carrier-protein] synthase activity"/>
    <property type="evidence" value="ECO:0007669"/>
    <property type="project" value="UniProtKB-UniRule"/>
</dbReference>
<dbReference type="GO" id="GO:0000287">
    <property type="term" value="F:magnesium ion binding"/>
    <property type="evidence" value="ECO:0007669"/>
    <property type="project" value="UniProtKB-UniRule"/>
</dbReference>
<dbReference type="GO" id="GO:0006633">
    <property type="term" value="P:fatty acid biosynthetic process"/>
    <property type="evidence" value="ECO:0007669"/>
    <property type="project" value="UniProtKB-UniRule"/>
</dbReference>
<dbReference type="Gene3D" id="3.90.470.20">
    <property type="entry name" value="4'-phosphopantetheinyl transferase domain"/>
    <property type="match status" value="1"/>
</dbReference>
<dbReference type="HAMAP" id="MF_00101">
    <property type="entry name" value="AcpS"/>
    <property type="match status" value="1"/>
</dbReference>
<dbReference type="InterPro" id="IPR008278">
    <property type="entry name" value="4-PPantetheinyl_Trfase_dom"/>
</dbReference>
<dbReference type="InterPro" id="IPR037143">
    <property type="entry name" value="4-PPantetheinyl_Trfase_dom_sf"/>
</dbReference>
<dbReference type="InterPro" id="IPR002582">
    <property type="entry name" value="ACPS"/>
</dbReference>
<dbReference type="InterPro" id="IPR004568">
    <property type="entry name" value="Ppantetheine-prot_Trfase_dom"/>
</dbReference>
<dbReference type="NCBIfam" id="TIGR00516">
    <property type="entry name" value="acpS"/>
    <property type="match status" value="1"/>
</dbReference>
<dbReference type="NCBIfam" id="TIGR00556">
    <property type="entry name" value="pantethn_trn"/>
    <property type="match status" value="1"/>
</dbReference>
<dbReference type="NCBIfam" id="NF011254">
    <property type="entry name" value="PRK14660.1"/>
    <property type="match status" value="1"/>
</dbReference>
<dbReference type="Pfam" id="PF01648">
    <property type="entry name" value="ACPS"/>
    <property type="match status" value="1"/>
</dbReference>
<dbReference type="SUPFAM" id="SSF56214">
    <property type="entry name" value="4'-phosphopantetheinyl transferase"/>
    <property type="match status" value="1"/>
</dbReference>
<gene>
    <name evidence="1" type="primary">acpS</name>
    <name type="ordered locus">Acid345_4518</name>
</gene>
<evidence type="ECO:0000255" key="1">
    <source>
        <dbReference type="HAMAP-Rule" id="MF_00101"/>
    </source>
</evidence>
<comment type="function">
    <text evidence="1">Transfers the 4'-phosphopantetheine moiety from coenzyme A to a Ser of acyl-carrier-protein.</text>
</comment>
<comment type="catalytic activity">
    <reaction evidence="1">
        <text>apo-[ACP] + CoA = holo-[ACP] + adenosine 3',5'-bisphosphate + H(+)</text>
        <dbReference type="Rhea" id="RHEA:12068"/>
        <dbReference type="Rhea" id="RHEA-COMP:9685"/>
        <dbReference type="Rhea" id="RHEA-COMP:9690"/>
        <dbReference type="ChEBI" id="CHEBI:15378"/>
        <dbReference type="ChEBI" id="CHEBI:29999"/>
        <dbReference type="ChEBI" id="CHEBI:57287"/>
        <dbReference type="ChEBI" id="CHEBI:58343"/>
        <dbReference type="ChEBI" id="CHEBI:64479"/>
        <dbReference type="EC" id="2.7.8.7"/>
    </reaction>
</comment>
<comment type="cofactor">
    <cofactor evidence="1">
        <name>Mg(2+)</name>
        <dbReference type="ChEBI" id="CHEBI:18420"/>
    </cofactor>
</comment>
<comment type="subcellular location">
    <subcellularLocation>
        <location evidence="1">Cytoplasm</location>
    </subcellularLocation>
</comment>
<comment type="similarity">
    <text evidence="1">Belongs to the P-Pant transferase superfamily. AcpS family.</text>
</comment>
<proteinExistence type="inferred from homology"/>
<protein>
    <recommendedName>
        <fullName evidence="1">Holo-[acyl-carrier-protein] synthase</fullName>
        <shortName evidence="1">Holo-ACP synthase</shortName>
        <ecNumber evidence="1">2.7.8.7</ecNumber>
    </recommendedName>
    <alternativeName>
        <fullName evidence="1">4'-phosphopantetheinyl transferase AcpS</fullName>
    </alternativeName>
</protein>
<feature type="chain" id="PRO_1000008376" description="Holo-[acyl-carrier-protein] synthase">
    <location>
        <begin position="1"/>
        <end position="125"/>
    </location>
</feature>
<feature type="binding site" evidence="1">
    <location>
        <position position="8"/>
    </location>
    <ligand>
        <name>Mg(2+)</name>
        <dbReference type="ChEBI" id="CHEBI:18420"/>
    </ligand>
</feature>
<feature type="binding site" evidence="1">
    <location>
        <position position="57"/>
    </location>
    <ligand>
        <name>Mg(2+)</name>
        <dbReference type="ChEBI" id="CHEBI:18420"/>
    </ligand>
</feature>
<organism>
    <name type="scientific">Koribacter versatilis (strain Ellin345)</name>
    <dbReference type="NCBI Taxonomy" id="204669"/>
    <lineage>
        <taxon>Bacteria</taxon>
        <taxon>Pseudomonadati</taxon>
        <taxon>Acidobacteriota</taxon>
        <taxon>Terriglobia</taxon>
        <taxon>Terriglobales</taxon>
        <taxon>Candidatus Korobacteraceae</taxon>
        <taxon>Candidatus Korobacter</taxon>
    </lineage>
</organism>
<name>ACPS_KORVE</name>
<reference key="1">
    <citation type="journal article" date="2009" name="Appl. Environ. Microbiol.">
        <title>Three genomes from the phylum Acidobacteria provide insight into the lifestyles of these microorganisms in soils.</title>
        <authorList>
            <person name="Ward N.L."/>
            <person name="Challacombe J.F."/>
            <person name="Janssen P.H."/>
            <person name="Henrissat B."/>
            <person name="Coutinho P.M."/>
            <person name="Wu M."/>
            <person name="Xie G."/>
            <person name="Haft D.H."/>
            <person name="Sait M."/>
            <person name="Badger J."/>
            <person name="Barabote R.D."/>
            <person name="Bradley B."/>
            <person name="Brettin T.S."/>
            <person name="Brinkac L.M."/>
            <person name="Bruce D."/>
            <person name="Creasy T."/>
            <person name="Daugherty S.C."/>
            <person name="Davidsen T.M."/>
            <person name="DeBoy R.T."/>
            <person name="Detter J.C."/>
            <person name="Dodson R.J."/>
            <person name="Durkin A.S."/>
            <person name="Ganapathy A."/>
            <person name="Gwinn-Giglio M."/>
            <person name="Han C.S."/>
            <person name="Khouri H."/>
            <person name="Kiss H."/>
            <person name="Kothari S.P."/>
            <person name="Madupu R."/>
            <person name="Nelson K.E."/>
            <person name="Nelson W.C."/>
            <person name="Paulsen I."/>
            <person name="Penn K."/>
            <person name="Ren Q."/>
            <person name="Rosovitz M.J."/>
            <person name="Selengut J.D."/>
            <person name="Shrivastava S."/>
            <person name="Sullivan S.A."/>
            <person name="Tapia R."/>
            <person name="Thompson L.S."/>
            <person name="Watkins K.L."/>
            <person name="Yang Q."/>
            <person name="Yu C."/>
            <person name="Zafar N."/>
            <person name="Zhou L."/>
            <person name="Kuske C.R."/>
        </authorList>
    </citation>
    <scope>NUCLEOTIDE SEQUENCE [LARGE SCALE GENOMIC DNA]</scope>
    <source>
        <strain>Ellin345</strain>
    </source>
</reference>